<proteinExistence type="inferred from homology"/>
<name>ENO_HALSA</name>
<sequence>MTRIEAVRYRPILDSRGNKTVEAEVTTDDGGFGRAAAPSGASTGEHEAVELPVGEAIAAGRERIAPRLEGREFAGDQRGVDAALHAADDTTDFSAVGANVAVATSMAAAKAAADVLGVHTYQHLGGALRGRNFPVPLGNVLGGGAHAADATAIQEFLVAATGAPSVRQAVFANAAVHQRVKDRLDDDGVPAAKGDEGAWAPSIDDATAFDVVAGAAAEVADEFGFDVRLGLDLAAAERYDGDEYVFGDDRRSTAAQIEYVAGLVSEYDLAYVEDPLDENDFEAFAELTDRVGDETLVCGDDLFVTNTERLQRGIDAGAANSILVKPNQIGTLTDAVDAIELATRNGYDAVVSHRSGETEDTTIAHLAVATDAPFIKTGAVGGERTAKLNELIRIADEA</sequence>
<protein>
    <recommendedName>
        <fullName evidence="1">Enolase</fullName>
        <ecNumber evidence="1">4.2.1.11</ecNumber>
    </recommendedName>
    <alternativeName>
        <fullName evidence="1">2-phospho-D-glycerate hydro-lyase</fullName>
    </alternativeName>
    <alternativeName>
        <fullName evidence="1">2-phosphoglycerate dehydratase</fullName>
    </alternativeName>
</protein>
<accession>Q9HQI9</accession>
<organism>
    <name type="scientific">Halobacterium salinarum (strain ATCC 700922 / JCM 11081 / NRC-1)</name>
    <name type="common">Halobacterium halobium</name>
    <dbReference type="NCBI Taxonomy" id="64091"/>
    <lineage>
        <taxon>Archaea</taxon>
        <taxon>Methanobacteriati</taxon>
        <taxon>Methanobacteriota</taxon>
        <taxon>Stenosarchaea group</taxon>
        <taxon>Halobacteria</taxon>
        <taxon>Halobacteriales</taxon>
        <taxon>Halobacteriaceae</taxon>
        <taxon>Halobacterium</taxon>
        <taxon>Halobacterium salinarum NRC-34001</taxon>
    </lineage>
</organism>
<evidence type="ECO:0000255" key="1">
    <source>
        <dbReference type="HAMAP-Rule" id="MF_00318"/>
    </source>
</evidence>
<comment type="function">
    <text evidence="1">Catalyzes the reversible conversion of 2-phosphoglycerate (2-PG) into phosphoenolpyruvate (PEP). It is essential for the degradation of carbohydrates via glycolysis.</text>
</comment>
<comment type="catalytic activity">
    <reaction evidence="1">
        <text>(2R)-2-phosphoglycerate = phosphoenolpyruvate + H2O</text>
        <dbReference type="Rhea" id="RHEA:10164"/>
        <dbReference type="ChEBI" id="CHEBI:15377"/>
        <dbReference type="ChEBI" id="CHEBI:58289"/>
        <dbReference type="ChEBI" id="CHEBI:58702"/>
        <dbReference type="EC" id="4.2.1.11"/>
    </reaction>
</comment>
<comment type="cofactor">
    <cofactor evidence="1">
        <name>Mg(2+)</name>
        <dbReference type="ChEBI" id="CHEBI:18420"/>
    </cofactor>
    <text evidence="1">Binds a second Mg(2+) ion via substrate during catalysis.</text>
</comment>
<comment type="pathway">
    <text evidence="1">Carbohydrate degradation; glycolysis; pyruvate from D-glyceraldehyde 3-phosphate: step 4/5.</text>
</comment>
<comment type="subcellular location">
    <subcellularLocation>
        <location evidence="1">Cytoplasm</location>
    </subcellularLocation>
    <subcellularLocation>
        <location evidence="1">Secreted</location>
    </subcellularLocation>
    <subcellularLocation>
        <location evidence="1">Cell surface</location>
    </subcellularLocation>
    <text evidence="1">Fractions of enolase are present in both the cytoplasm and on the cell surface.</text>
</comment>
<comment type="similarity">
    <text evidence="1">Belongs to the enolase family.</text>
</comment>
<reference key="1">
    <citation type="journal article" date="2000" name="Proc. Natl. Acad. Sci. U.S.A.">
        <title>Genome sequence of Halobacterium species NRC-1.</title>
        <authorList>
            <person name="Ng W.V."/>
            <person name="Kennedy S.P."/>
            <person name="Mahairas G.G."/>
            <person name="Berquist B."/>
            <person name="Pan M."/>
            <person name="Shukla H.D."/>
            <person name="Lasky S.R."/>
            <person name="Baliga N.S."/>
            <person name="Thorsson V."/>
            <person name="Sbrogna J."/>
            <person name="Swartzell S."/>
            <person name="Weir D."/>
            <person name="Hall J."/>
            <person name="Dahl T.A."/>
            <person name="Welti R."/>
            <person name="Goo Y.A."/>
            <person name="Leithauser B."/>
            <person name="Keller K."/>
            <person name="Cruz R."/>
            <person name="Danson M.J."/>
            <person name="Hough D.W."/>
            <person name="Maddocks D.G."/>
            <person name="Jablonski P.E."/>
            <person name="Krebs M.P."/>
            <person name="Angevine C.M."/>
            <person name="Dale H."/>
            <person name="Isenbarger T.A."/>
            <person name="Peck R.F."/>
            <person name="Pohlschroder M."/>
            <person name="Spudich J.L."/>
            <person name="Jung K.-H."/>
            <person name="Alam M."/>
            <person name="Freitas T."/>
            <person name="Hou S."/>
            <person name="Daniels C.J."/>
            <person name="Dennis P.P."/>
            <person name="Omer A.D."/>
            <person name="Ebhardt H."/>
            <person name="Lowe T.M."/>
            <person name="Liang P."/>
            <person name="Riley M."/>
            <person name="Hood L."/>
            <person name="DasSarma S."/>
        </authorList>
    </citation>
    <scope>NUCLEOTIDE SEQUENCE [LARGE SCALE GENOMIC DNA]</scope>
    <source>
        <strain>ATCC 700922 / JCM 11081 / NRC-1</strain>
    </source>
</reference>
<keyword id="KW-0963">Cytoplasm</keyword>
<keyword id="KW-0324">Glycolysis</keyword>
<keyword id="KW-0456">Lyase</keyword>
<keyword id="KW-0460">Magnesium</keyword>
<keyword id="KW-0479">Metal-binding</keyword>
<keyword id="KW-1185">Reference proteome</keyword>
<keyword id="KW-0964">Secreted</keyword>
<feature type="chain" id="PRO_0000134022" description="Enolase">
    <location>
        <begin position="1"/>
        <end position="398"/>
    </location>
</feature>
<feature type="active site" description="Proton donor" evidence="1">
    <location>
        <position position="196"/>
    </location>
</feature>
<feature type="active site" description="Proton acceptor" evidence="1">
    <location>
        <position position="325"/>
    </location>
</feature>
<feature type="binding site" evidence="1">
    <location>
        <position position="154"/>
    </location>
    <ligand>
        <name>(2R)-2-phosphoglycerate</name>
        <dbReference type="ChEBI" id="CHEBI:58289"/>
    </ligand>
</feature>
<feature type="binding site" evidence="1">
    <location>
        <position position="232"/>
    </location>
    <ligand>
        <name>Mg(2+)</name>
        <dbReference type="ChEBI" id="CHEBI:18420"/>
    </ligand>
</feature>
<feature type="binding site" evidence="1">
    <location>
        <position position="273"/>
    </location>
    <ligand>
        <name>Mg(2+)</name>
        <dbReference type="ChEBI" id="CHEBI:18420"/>
    </ligand>
</feature>
<feature type="binding site" evidence="1">
    <location>
        <position position="300"/>
    </location>
    <ligand>
        <name>Mg(2+)</name>
        <dbReference type="ChEBI" id="CHEBI:18420"/>
    </ligand>
</feature>
<feature type="binding site" evidence="1">
    <location>
        <position position="325"/>
    </location>
    <ligand>
        <name>(2R)-2-phosphoglycerate</name>
        <dbReference type="ChEBI" id="CHEBI:58289"/>
    </ligand>
</feature>
<feature type="binding site" evidence="1">
    <location>
        <position position="354"/>
    </location>
    <ligand>
        <name>(2R)-2-phosphoglycerate</name>
        <dbReference type="ChEBI" id="CHEBI:58289"/>
    </ligand>
</feature>
<feature type="binding site" evidence="1">
    <location>
        <position position="355"/>
    </location>
    <ligand>
        <name>(2R)-2-phosphoglycerate</name>
        <dbReference type="ChEBI" id="CHEBI:58289"/>
    </ligand>
</feature>
<feature type="binding site" evidence="1">
    <location>
        <position position="376"/>
    </location>
    <ligand>
        <name>(2R)-2-phosphoglycerate</name>
        <dbReference type="ChEBI" id="CHEBI:58289"/>
    </ligand>
</feature>
<dbReference type="EC" id="4.2.1.11" evidence="1"/>
<dbReference type="EMBL" id="AE004437">
    <property type="protein sequence ID" value="AAG19526.1"/>
    <property type="molecule type" value="Genomic_DNA"/>
</dbReference>
<dbReference type="PIR" id="B84270">
    <property type="entry name" value="B84270"/>
</dbReference>
<dbReference type="RefSeq" id="WP_010902821.1">
    <property type="nucleotide sequence ID" value="NC_002607.1"/>
</dbReference>
<dbReference type="SMR" id="Q9HQI9"/>
<dbReference type="FunCoup" id="Q9HQI9">
    <property type="interactions" value="131"/>
</dbReference>
<dbReference type="STRING" id="64091.VNG_1142G"/>
<dbReference type="PaxDb" id="64091-VNG_1142G"/>
<dbReference type="KEGG" id="hal:VNG_1142G"/>
<dbReference type="PATRIC" id="fig|64091.14.peg.872"/>
<dbReference type="HOGENOM" id="CLU_031223_0_1_2"/>
<dbReference type="InParanoid" id="Q9HQI9"/>
<dbReference type="OrthoDB" id="8680at2157"/>
<dbReference type="PhylomeDB" id="Q9HQI9"/>
<dbReference type="UniPathway" id="UPA00109">
    <property type="reaction ID" value="UER00187"/>
</dbReference>
<dbReference type="Proteomes" id="UP000000554">
    <property type="component" value="Chromosome"/>
</dbReference>
<dbReference type="GO" id="GO:0009986">
    <property type="term" value="C:cell surface"/>
    <property type="evidence" value="ECO:0007669"/>
    <property type="project" value="UniProtKB-SubCell"/>
</dbReference>
<dbReference type="GO" id="GO:0005576">
    <property type="term" value="C:extracellular region"/>
    <property type="evidence" value="ECO:0007669"/>
    <property type="project" value="UniProtKB-SubCell"/>
</dbReference>
<dbReference type="GO" id="GO:0000015">
    <property type="term" value="C:phosphopyruvate hydratase complex"/>
    <property type="evidence" value="ECO:0000318"/>
    <property type="project" value="GO_Central"/>
</dbReference>
<dbReference type="GO" id="GO:0000287">
    <property type="term" value="F:magnesium ion binding"/>
    <property type="evidence" value="ECO:0007669"/>
    <property type="project" value="UniProtKB-UniRule"/>
</dbReference>
<dbReference type="GO" id="GO:0004634">
    <property type="term" value="F:phosphopyruvate hydratase activity"/>
    <property type="evidence" value="ECO:0000318"/>
    <property type="project" value="GO_Central"/>
</dbReference>
<dbReference type="GO" id="GO:0006096">
    <property type="term" value="P:glycolytic process"/>
    <property type="evidence" value="ECO:0000318"/>
    <property type="project" value="GO_Central"/>
</dbReference>
<dbReference type="CDD" id="cd03313">
    <property type="entry name" value="enolase"/>
    <property type="match status" value="1"/>
</dbReference>
<dbReference type="Gene3D" id="3.20.20.120">
    <property type="entry name" value="Enolase-like C-terminal domain"/>
    <property type="match status" value="1"/>
</dbReference>
<dbReference type="Gene3D" id="3.30.390.10">
    <property type="entry name" value="Enolase-like, N-terminal domain"/>
    <property type="match status" value="1"/>
</dbReference>
<dbReference type="HAMAP" id="MF_00318">
    <property type="entry name" value="Enolase"/>
    <property type="match status" value="1"/>
</dbReference>
<dbReference type="InterPro" id="IPR000941">
    <property type="entry name" value="Enolase"/>
</dbReference>
<dbReference type="InterPro" id="IPR036849">
    <property type="entry name" value="Enolase-like_C_sf"/>
</dbReference>
<dbReference type="InterPro" id="IPR029017">
    <property type="entry name" value="Enolase-like_N"/>
</dbReference>
<dbReference type="InterPro" id="IPR020810">
    <property type="entry name" value="Enolase_C"/>
</dbReference>
<dbReference type="InterPro" id="IPR020809">
    <property type="entry name" value="Enolase_CS"/>
</dbReference>
<dbReference type="InterPro" id="IPR020811">
    <property type="entry name" value="Enolase_N"/>
</dbReference>
<dbReference type="PANTHER" id="PTHR11902">
    <property type="entry name" value="ENOLASE"/>
    <property type="match status" value="1"/>
</dbReference>
<dbReference type="PANTHER" id="PTHR11902:SF1">
    <property type="entry name" value="ENOLASE"/>
    <property type="match status" value="1"/>
</dbReference>
<dbReference type="Pfam" id="PF00113">
    <property type="entry name" value="Enolase_C"/>
    <property type="match status" value="1"/>
</dbReference>
<dbReference type="Pfam" id="PF03952">
    <property type="entry name" value="Enolase_N"/>
    <property type="match status" value="1"/>
</dbReference>
<dbReference type="PIRSF" id="PIRSF001400">
    <property type="entry name" value="Enolase"/>
    <property type="match status" value="1"/>
</dbReference>
<dbReference type="PRINTS" id="PR00148">
    <property type="entry name" value="ENOLASE"/>
</dbReference>
<dbReference type="SFLD" id="SFLDF00002">
    <property type="entry name" value="enolase"/>
    <property type="match status" value="1"/>
</dbReference>
<dbReference type="SFLD" id="SFLDG00178">
    <property type="entry name" value="enolase"/>
    <property type="match status" value="1"/>
</dbReference>
<dbReference type="SMART" id="SM01192">
    <property type="entry name" value="Enolase_C"/>
    <property type="match status" value="1"/>
</dbReference>
<dbReference type="SMART" id="SM01193">
    <property type="entry name" value="Enolase_N"/>
    <property type="match status" value="1"/>
</dbReference>
<dbReference type="SUPFAM" id="SSF51604">
    <property type="entry name" value="Enolase C-terminal domain-like"/>
    <property type="match status" value="1"/>
</dbReference>
<dbReference type="SUPFAM" id="SSF54826">
    <property type="entry name" value="Enolase N-terminal domain-like"/>
    <property type="match status" value="1"/>
</dbReference>
<dbReference type="PROSITE" id="PS00164">
    <property type="entry name" value="ENOLASE"/>
    <property type="match status" value="1"/>
</dbReference>
<gene>
    <name evidence="1" type="primary">eno</name>
    <name type="ordered locus">VNG_1142G</name>
</gene>